<reference key="1">
    <citation type="journal article" date="2002" name="J. Hum. Genet.">
        <title>Molecular cloning and characterization of a novel human Rab (Rab2B) gene.</title>
        <authorList>
            <person name="Ni X."/>
            <person name="Ma Y."/>
            <person name="Cheng H."/>
            <person name="Jiang M."/>
            <person name="Guo L."/>
            <person name="Ji C."/>
            <person name="Gu S."/>
            <person name="Cao Y."/>
            <person name="Xie Y."/>
            <person name="Mao Y."/>
        </authorList>
    </citation>
    <scope>NUCLEOTIDE SEQUENCE [MRNA] (ISOFORM 1)</scope>
</reference>
<reference key="2">
    <citation type="journal article" date="2004" name="Nat. Genet.">
        <title>Complete sequencing and characterization of 21,243 full-length human cDNAs.</title>
        <authorList>
            <person name="Ota T."/>
            <person name="Suzuki Y."/>
            <person name="Nishikawa T."/>
            <person name="Otsuki T."/>
            <person name="Sugiyama T."/>
            <person name="Irie R."/>
            <person name="Wakamatsu A."/>
            <person name="Hayashi K."/>
            <person name="Sato H."/>
            <person name="Nagai K."/>
            <person name="Kimura K."/>
            <person name="Makita H."/>
            <person name="Sekine M."/>
            <person name="Obayashi M."/>
            <person name="Nishi T."/>
            <person name="Shibahara T."/>
            <person name="Tanaka T."/>
            <person name="Ishii S."/>
            <person name="Yamamoto J."/>
            <person name="Saito K."/>
            <person name="Kawai Y."/>
            <person name="Isono Y."/>
            <person name="Nakamura Y."/>
            <person name="Nagahari K."/>
            <person name="Murakami K."/>
            <person name="Yasuda T."/>
            <person name="Iwayanagi T."/>
            <person name="Wagatsuma M."/>
            <person name="Shiratori A."/>
            <person name="Sudo H."/>
            <person name="Hosoiri T."/>
            <person name="Kaku Y."/>
            <person name="Kodaira H."/>
            <person name="Kondo H."/>
            <person name="Sugawara M."/>
            <person name="Takahashi M."/>
            <person name="Kanda K."/>
            <person name="Yokoi T."/>
            <person name="Furuya T."/>
            <person name="Kikkawa E."/>
            <person name="Omura Y."/>
            <person name="Abe K."/>
            <person name="Kamihara K."/>
            <person name="Katsuta N."/>
            <person name="Sato K."/>
            <person name="Tanikawa M."/>
            <person name="Yamazaki M."/>
            <person name="Ninomiya K."/>
            <person name="Ishibashi T."/>
            <person name="Yamashita H."/>
            <person name="Murakawa K."/>
            <person name="Fujimori K."/>
            <person name="Tanai H."/>
            <person name="Kimata M."/>
            <person name="Watanabe M."/>
            <person name="Hiraoka S."/>
            <person name="Chiba Y."/>
            <person name="Ishida S."/>
            <person name="Ono Y."/>
            <person name="Takiguchi S."/>
            <person name="Watanabe S."/>
            <person name="Yosida M."/>
            <person name="Hotuta T."/>
            <person name="Kusano J."/>
            <person name="Kanehori K."/>
            <person name="Takahashi-Fujii A."/>
            <person name="Hara H."/>
            <person name="Tanase T.-O."/>
            <person name="Nomura Y."/>
            <person name="Togiya S."/>
            <person name="Komai F."/>
            <person name="Hara R."/>
            <person name="Takeuchi K."/>
            <person name="Arita M."/>
            <person name="Imose N."/>
            <person name="Musashino K."/>
            <person name="Yuuki H."/>
            <person name="Oshima A."/>
            <person name="Sasaki N."/>
            <person name="Aotsuka S."/>
            <person name="Yoshikawa Y."/>
            <person name="Matsunawa H."/>
            <person name="Ichihara T."/>
            <person name="Shiohata N."/>
            <person name="Sano S."/>
            <person name="Moriya S."/>
            <person name="Momiyama H."/>
            <person name="Satoh N."/>
            <person name="Takami S."/>
            <person name="Terashima Y."/>
            <person name="Suzuki O."/>
            <person name="Nakagawa S."/>
            <person name="Senoh A."/>
            <person name="Mizoguchi H."/>
            <person name="Goto Y."/>
            <person name="Shimizu F."/>
            <person name="Wakebe H."/>
            <person name="Hishigaki H."/>
            <person name="Watanabe T."/>
            <person name="Sugiyama A."/>
            <person name="Takemoto M."/>
            <person name="Kawakami B."/>
            <person name="Yamazaki M."/>
            <person name="Watanabe K."/>
            <person name="Kumagai A."/>
            <person name="Itakura S."/>
            <person name="Fukuzumi Y."/>
            <person name="Fujimori Y."/>
            <person name="Komiyama M."/>
            <person name="Tashiro H."/>
            <person name="Tanigami A."/>
            <person name="Fujiwara T."/>
            <person name="Ono T."/>
            <person name="Yamada K."/>
            <person name="Fujii Y."/>
            <person name="Ozaki K."/>
            <person name="Hirao M."/>
            <person name="Ohmori Y."/>
            <person name="Kawabata A."/>
            <person name="Hikiji T."/>
            <person name="Kobatake N."/>
            <person name="Inagaki H."/>
            <person name="Ikema Y."/>
            <person name="Okamoto S."/>
            <person name="Okitani R."/>
            <person name="Kawakami T."/>
            <person name="Noguchi S."/>
            <person name="Itoh T."/>
            <person name="Shigeta K."/>
            <person name="Senba T."/>
            <person name="Matsumura K."/>
            <person name="Nakajima Y."/>
            <person name="Mizuno T."/>
            <person name="Morinaga M."/>
            <person name="Sasaki M."/>
            <person name="Togashi T."/>
            <person name="Oyama M."/>
            <person name="Hata H."/>
            <person name="Watanabe M."/>
            <person name="Komatsu T."/>
            <person name="Mizushima-Sugano J."/>
            <person name="Satoh T."/>
            <person name="Shirai Y."/>
            <person name="Takahashi Y."/>
            <person name="Nakagawa K."/>
            <person name="Okumura K."/>
            <person name="Nagase T."/>
            <person name="Nomura N."/>
            <person name="Kikuchi H."/>
            <person name="Masuho Y."/>
            <person name="Yamashita R."/>
            <person name="Nakai K."/>
            <person name="Yada T."/>
            <person name="Nakamura Y."/>
            <person name="Ohara O."/>
            <person name="Isogai T."/>
            <person name="Sugano S."/>
        </authorList>
    </citation>
    <scope>NUCLEOTIDE SEQUENCE [LARGE SCALE MRNA] (ISOFORMS 1 AND 2)</scope>
    <source>
        <tissue>Subthalamic nucleus</tissue>
    </source>
</reference>
<reference key="3">
    <citation type="submission" date="2005-09" db="EMBL/GenBank/DDBJ databases">
        <authorList>
            <person name="Mural R.J."/>
            <person name="Istrail S."/>
            <person name="Sutton G.G."/>
            <person name="Florea L."/>
            <person name="Halpern A.L."/>
            <person name="Mobarry C.M."/>
            <person name="Lippert R."/>
            <person name="Walenz B."/>
            <person name="Shatkay H."/>
            <person name="Dew I."/>
            <person name="Miller J.R."/>
            <person name="Flanigan M.J."/>
            <person name="Edwards N.J."/>
            <person name="Bolanos R."/>
            <person name="Fasulo D."/>
            <person name="Halldorsson B.V."/>
            <person name="Hannenhalli S."/>
            <person name="Turner R."/>
            <person name="Yooseph S."/>
            <person name="Lu F."/>
            <person name="Nusskern D.R."/>
            <person name="Shue B.C."/>
            <person name="Zheng X.H."/>
            <person name="Zhong F."/>
            <person name="Delcher A.L."/>
            <person name="Huson D.H."/>
            <person name="Kravitz S.A."/>
            <person name="Mouchard L."/>
            <person name="Reinert K."/>
            <person name="Remington K.A."/>
            <person name="Clark A.G."/>
            <person name="Waterman M.S."/>
            <person name="Eichler E.E."/>
            <person name="Adams M.D."/>
            <person name="Hunkapiller M.W."/>
            <person name="Myers E.W."/>
            <person name="Venter J.C."/>
        </authorList>
    </citation>
    <scope>NUCLEOTIDE SEQUENCE [LARGE SCALE GENOMIC DNA]</scope>
</reference>
<reference key="4">
    <citation type="journal article" date="2004" name="Genome Res.">
        <title>The status, quality, and expansion of the NIH full-length cDNA project: the Mammalian Gene Collection (MGC).</title>
        <authorList>
            <consortium name="The MGC Project Team"/>
        </authorList>
    </citation>
    <scope>NUCLEOTIDE SEQUENCE [LARGE SCALE MRNA] (ISOFORMS 1 AND 2)</scope>
    <source>
        <tissue>Skin</tissue>
        <tissue>Testis</tissue>
    </source>
</reference>
<reference key="5">
    <citation type="journal article" date="2011" name="BMC Syst. Biol.">
        <title>Initial characterization of the human central proteome.</title>
        <authorList>
            <person name="Burkard T.R."/>
            <person name="Planyavsky M."/>
            <person name="Kaupe I."/>
            <person name="Breitwieser F.P."/>
            <person name="Buerckstuemmer T."/>
            <person name="Bennett K.L."/>
            <person name="Superti-Furga G."/>
            <person name="Colinge J."/>
        </authorList>
    </citation>
    <scope>IDENTIFICATION BY MASS SPECTROMETRY [LARGE SCALE ANALYSIS]</scope>
</reference>
<reference key="6">
    <citation type="journal article" date="2013" name="J. Proteome Res.">
        <title>Toward a comprehensive characterization of a human cancer cell phosphoproteome.</title>
        <authorList>
            <person name="Zhou H."/>
            <person name="Di Palma S."/>
            <person name="Preisinger C."/>
            <person name="Peng M."/>
            <person name="Polat A.N."/>
            <person name="Heck A.J."/>
            <person name="Mohammed S."/>
        </authorList>
    </citation>
    <scope>PHOSPHORYLATION [LARGE SCALE ANALYSIS] AT SER-202</scope>
    <scope>IDENTIFICATION BY MASS SPECTROMETRY [LARGE SCALE ANALYSIS]</scope>
    <source>
        <tissue>Erythroleukemia</tissue>
    </source>
</reference>
<reference key="7">
    <citation type="journal article" date="2015" name="J. Biol. Chem.">
        <title>Small GTPase Rab2B and Its Specific Binding Protein Golgi-associated Rab2B Interactor-like 4 (GARI-L4) Regulate Golgi Morphology.</title>
        <authorList>
            <person name="Aizawa M."/>
            <person name="Fukuda M."/>
        </authorList>
    </citation>
    <scope>FUNCTION</scope>
    <scope>INTERACTION WITH GARIN4</scope>
    <scope>CATALYTIC ACTIVITY</scope>
</reference>
<reference key="8">
    <citation type="journal article" date="2017" name="J. Cell Biol.">
        <title>Rab2 promotes autophagic and endocytic lysosomal degradation.</title>
        <authorList>
            <person name="Lorincz P."/>
            <person name="Toth S."/>
            <person name="Benko P."/>
            <person name="Lakatos Z."/>
            <person name="Boda A."/>
            <person name="Glatz G."/>
            <person name="Zobel M."/>
            <person name="Bisi S."/>
            <person name="Hegedus K."/>
            <person name="Takats S."/>
            <person name="Scita G."/>
            <person name="Juhasz G."/>
        </authorList>
    </citation>
    <scope>FUNCTION</scope>
</reference>
<reference evidence="13" key="9">
    <citation type="submission" date="2009-02" db="PDB data bank">
        <title>Crystal structure of human RAB2B.</title>
        <authorList>
            <consortium name="Structural genomics consortium (SGC)"/>
        </authorList>
    </citation>
    <scope>X-RAY CRYSTALLOGRAPHY (1.5 ANGSTROMS) OF 5-176 IN COMPLEX WITH GDP AND MG(2+)</scope>
    <scope>COFACTOR</scope>
</reference>
<comment type="function">
    <text evidence="2 6 11">The small GTPases Rab are key regulators of intracellular membrane trafficking, from the formation of transport vesicles to their fusion with membranes. Rabs cycle between active GTP-bound and inactive GDP-bound states. In their active state, drive transport of vesicular carriers from donor organelles to acceptor organelles to regulate the membrane traffic that maintains organelle identity and morphology. Regulates the compacted morphology of the Golgi (Probable). Promotes cytosolic DNA-induced innate immune responses. Regulates IFN responses against DNA viruses by regulating the CGAS-STING signaling axis (By similarity). Together with RAB2A redundantly required for efficient autophagic flux (PubMed:28483915).</text>
</comment>
<comment type="catalytic activity">
    <reaction evidence="11">
        <text>GTP + H2O = GDP + phosphate + H(+)</text>
        <dbReference type="Rhea" id="RHEA:19669"/>
        <dbReference type="ChEBI" id="CHEBI:15377"/>
        <dbReference type="ChEBI" id="CHEBI:15378"/>
        <dbReference type="ChEBI" id="CHEBI:37565"/>
        <dbReference type="ChEBI" id="CHEBI:43474"/>
        <dbReference type="ChEBI" id="CHEBI:58189"/>
        <dbReference type="EC" id="3.6.5.2"/>
    </reaction>
    <physiologicalReaction direction="left-to-right" evidence="11">
        <dbReference type="Rhea" id="RHEA:19670"/>
    </physiologicalReaction>
</comment>
<comment type="cofactor">
    <cofactor evidence="7">
        <name>Mg(2+)</name>
        <dbReference type="ChEBI" id="CHEBI:18420"/>
    </cofactor>
</comment>
<comment type="activity regulation">
    <text evidence="10">Regulated by guanine nucleotide exchange factors (GEFs) which promote the exchange of bound GDP for free GTP, GTPase activating proteins (GAPs) which increase the GTP hydrolysis activity, and GDP dissociation inhibitors (GDIs) which inhibit the dissociation of the nucleotide from the GTPase.</text>
</comment>
<comment type="subunit">
    <text evidence="2 5">Interacts (in GTP-bound form) with GARIN4 (via N-terminus) (PubMed:26209634). Interacts (in GTP-bound form) with GARIN5A. Interacts (in GTP-bound form) with GARIN1B (By similarity). Interacts with VPS39 and VPS41 (By similarity).</text>
</comment>
<comment type="interaction">
    <interactant intactId="EBI-5542466">
        <id>Q8WUD1</id>
    </interactant>
    <interactant intactId="EBI-10173507">
        <id>Q6UY14-3</id>
        <label>ADAMTSL4</label>
    </interactant>
    <organismsDiffer>false</organismsDiffer>
    <experiments>3</experiments>
</comment>
<comment type="interaction">
    <interactant intactId="EBI-5542466">
        <id>Q8WUD1</id>
    </interactant>
    <interactant intactId="EBI-2548012">
        <id>Q9H2G9</id>
        <label>BLZF1</label>
    </interactant>
    <organismsDiffer>false</organismsDiffer>
    <experiments>10</experiments>
</comment>
<comment type="interaction">
    <interactant intactId="EBI-5542466">
        <id>Q8WUD1</id>
    </interactant>
    <interactant intactId="EBI-2686288">
        <id>Q8IWE2</id>
        <label>FAM114A1</label>
    </interactant>
    <organismsDiffer>false</organismsDiffer>
    <experiments>7</experiments>
</comment>
<comment type="interaction">
    <interactant intactId="EBI-5542466">
        <id>Q8WUD1</id>
    </interactant>
    <interactant intactId="EBI-10973142">
        <id>Q9NRY5</id>
        <label>FAM114A2</label>
    </interactant>
    <organismsDiffer>false</organismsDiffer>
    <experiments>3</experiments>
</comment>
<comment type="interaction">
    <interactant intactId="EBI-5542466">
        <id>Q8WUD1</id>
    </interactant>
    <interactant intactId="EBI-12925824">
        <id>Q6NXP2-2</id>
        <label>GARIN1A</label>
    </interactant>
    <organismsDiffer>false</organismsDiffer>
    <experiments>6</experiments>
</comment>
<comment type="interaction">
    <interactant intactId="EBI-5542466">
        <id>Q8WUD1</id>
    </interactant>
    <interactant intactId="EBI-20113335">
        <id>Q8IYT1</id>
        <label>GARIN4</label>
    </interactant>
    <organismsDiffer>false</organismsDiffer>
    <experiments>3</experiments>
</comment>
<comment type="interaction">
    <interactant intactId="EBI-5542466">
        <id>Q8WUD1</id>
    </interactant>
    <interactant intactId="EBI-752049">
        <id>Q8NEG0</id>
        <label>GARIN6</label>
    </interactant>
    <organismsDiffer>false</organismsDiffer>
    <experiments>8</experiments>
</comment>
<comment type="interaction">
    <interactant intactId="EBI-5542466">
        <id>Q8WUD1</id>
    </interactant>
    <interactant intactId="EBI-1049143">
        <id>P50395</id>
        <label>GDI2</label>
    </interactant>
    <organismsDiffer>false</organismsDiffer>
    <experiments>3</experiments>
</comment>
<comment type="interaction">
    <interactant intactId="EBI-5542466">
        <id>Q8WUD1</id>
    </interactant>
    <interactant intactId="EBI-618309">
        <id>Q08379</id>
        <label>GOLGA2</label>
    </interactant>
    <organismsDiffer>false</organismsDiffer>
    <experiments>6</experiments>
</comment>
<comment type="interaction">
    <interactant intactId="EBI-5542466">
        <id>Q8WUD1</id>
    </interactant>
    <interactant intactId="EBI-1046751">
        <id>Q05084</id>
        <label>ICA1</label>
    </interactant>
    <organismsDiffer>false</organismsDiffer>
    <experiments>4</experiments>
</comment>
<comment type="interaction">
    <interactant intactId="EBI-5542466">
        <id>Q8WUD1</id>
    </interactant>
    <interactant intactId="EBI-16439278">
        <id>Q6FHY5</id>
        <label>MEOX2</label>
    </interactant>
    <organismsDiffer>false</organismsDiffer>
    <experiments>3</experiments>
</comment>
<comment type="interaction">
    <interactant intactId="EBI-5542466">
        <id>Q8WUD1</id>
    </interactant>
    <interactant intactId="EBI-745021">
        <id>Q96FJ0</id>
        <label>STAMBPL1</label>
    </interactant>
    <organismsDiffer>false</organismsDiffer>
    <experiments>3</experiments>
</comment>
<comment type="interaction">
    <interactant intactId="EBI-5542466">
        <id>Q8WUD1</id>
    </interactant>
    <interactant intactId="EBI-12096770">
        <id>O60806</id>
        <label>TBX19</label>
    </interactant>
    <organismsDiffer>false</organismsDiffer>
    <experiments>3</experiments>
</comment>
<comment type="interaction">
    <interactant intactId="EBI-5542466">
        <id>Q8WUD1</id>
    </interactant>
    <interactant intactId="EBI-749812">
        <id>Q6PKC3</id>
        <label>TXNDC11</label>
    </interactant>
    <organismsDiffer>false</organismsDiffer>
    <experiments>3</experiments>
</comment>
<comment type="interaction">
    <interactant intactId="EBI-5542466">
        <id>Q8WUD1</id>
    </interactant>
    <interactant intactId="EBI-12894399">
        <id>Q9H8Y1</id>
        <label>VRTN</label>
    </interactant>
    <organismsDiffer>false</organismsDiffer>
    <experiments>5</experiments>
</comment>
<comment type="interaction">
    <interactant intactId="EBI-25835884">
        <id>Q8WUD1-2</id>
    </interactant>
    <interactant intactId="EBI-718729">
        <id>P55212</id>
        <label>CASP6</label>
    </interactant>
    <organismsDiffer>false</organismsDiffer>
    <experiments>3</experiments>
</comment>
<comment type="interaction">
    <interactant intactId="EBI-25835884">
        <id>Q8WUD1-2</id>
    </interactant>
    <interactant intactId="EBI-348399">
        <id>P22607</id>
        <label>FGFR3</label>
    </interactant>
    <organismsDiffer>false</organismsDiffer>
    <experiments>3</experiments>
</comment>
<comment type="interaction">
    <interactant intactId="EBI-25835884">
        <id>Q8WUD1-2</id>
    </interactant>
    <interactant intactId="EBI-8285963">
        <id>Q14957</id>
        <label>GRIN2C</label>
    </interactant>
    <organismsDiffer>false</organismsDiffer>
    <experiments>3</experiments>
</comment>
<comment type="interaction">
    <interactant intactId="EBI-25835884">
        <id>Q8WUD1-2</id>
    </interactant>
    <interactant intactId="EBI-351506">
        <id>P06396</id>
        <label>GSN</label>
    </interactant>
    <organismsDiffer>false</organismsDiffer>
    <experiments>3</experiments>
</comment>
<comment type="interaction">
    <interactant intactId="EBI-25835884">
        <id>Q8WUD1-2</id>
    </interactant>
    <interactant intactId="EBI-473886">
        <id>O00291</id>
        <label>HIP1</label>
    </interactant>
    <organismsDiffer>false</organismsDiffer>
    <experiments>3</experiments>
</comment>
<comment type="interaction">
    <interactant intactId="EBI-25835884">
        <id>Q8WUD1-2</id>
    </interactant>
    <interactant intactId="EBI-21591415">
        <id>P13473-2</id>
        <label>LAMP2</label>
    </interactant>
    <organismsDiffer>false</organismsDiffer>
    <experiments>3</experiments>
</comment>
<comment type="interaction">
    <interactant intactId="EBI-25835884">
        <id>Q8WUD1-2</id>
    </interactant>
    <interactant intactId="EBI-286642">
        <id>P62826</id>
        <label>RAN</label>
    </interactant>
    <organismsDiffer>false</organismsDiffer>
    <experiments>3</experiments>
</comment>
<comment type="interaction">
    <interactant intactId="EBI-25835884">
        <id>Q8WUD1-2</id>
    </interactant>
    <interactant intactId="EBI-741480">
        <id>Q9UMX0</id>
        <label>UBQLN1</label>
    </interactant>
    <organismsDiffer>false</organismsDiffer>
    <experiments>3</experiments>
</comment>
<comment type="subcellular location">
    <subcellularLocation>
        <location evidence="2">Cell membrane</location>
        <topology evidence="2">Lipid-anchor</topology>
        <orientation evidence="2">Cytoplasmic side</orientation>
    </subcellularLocation>
    <subcellularLocation>
        <location evidence="2">Endoplasmic reticulum membrane</location>
        <topology evidence="2">Lipid-anchor</topology>
        <orientation evidence="2">Cytoplasmic side</orientation>
    </subcellularLocation>
    <subcellularLocation>
        <location evidence="2">Golgi apparatus membrane</location>
        <topology evidence="2">Lipid-anchor</topology>
        <orientation evidence="2">Cytoplasmic side</orientation>
    </subcellularLocation>
    <subcellularLocation>
        <location evidence="2">Cytoplasmic vesicle</location>
        <location evidence="2">Secretory vesicle</location>
        <location evidence="2">Acrosome</location>
    </subcellularLocation>
    <subcellularLocation>
        <location evidence="2">Cytoplasmic vesicle</location>
        <location evidence="2">Autophagosome membrane</location>
        <topology evidence="2">Lipid-anchor</topology>
        <orientation evidence="2">Cytoplasmic side</orientation>
    </subcellularLocation>
    <text evidence="2">Localized in the Golgi apparatus in the round spermatids and in the acrosome in the elongating spermatid.</text>
</comment>
<comment type="alternative products">
    <event type="alternative splicing"/>
    <isoform>
        <id>Q8WUD1-1</id>
        <name>1</name>
        <sequence type="displayed"/>
    </isoform>
    <isoform>
        <id>Q8WUD1-2</id>
        <name>2</name>
        <sequence type="described" ref="VSP_055829"/>
    </isoform>
</comment>
<comment type="tissue specificity">
    <text>Expressed in kidney, prostate, lung, liver, thymus, colon, pancreas, and skeletal muscle, and low levels in placenta. Not detected in heart, brain, spleen, testis, ovary, small intestine and leukocyte.</text>
</comment>
<comment type="domain">
    <text evidence="3">Switch 1, switch 2 and the interswitch regions are characteristic of Rab GTPases and mediate the interactions with Rab downstream effectors. The switch regions undergo conformational changes upon nucleotide binding which drives interaction with specific sets of effector proteins, with most effectors only binding to GTP-bound Rab.</text>
</comment>
<comment type="similarity">
    <text evidence="10">Belongs to the small GTPase superfamily. Rab family.</text>
</comment>
<protein>
    <recommendedName>
        <fullName evidence="10">Ras-related protein Rab-2B</fullName>
        <ecNumber evidence="11">3.6.5.2</ecNumber>
    </recommendedName>
</protein>
<name>RAB2B_HUMAN</name>
<organism>
    <name type="scientific">Homo sapiens</name>
    <name type="common">Human</name>
    <dbReference type="NCBI Taxonomy" id="9606"/>
    <lineage>
        <taxon>Eukaryota</taxon>
        <taxon>Metazoa</taxon>
        <taxon>Chordata</taxon>
        <taxon>Craniata</taxon>
        <taxon>Vertebrata</taxon>
        <taxon>Euteleostomi</taxon>
        <taxon>Mammalia</taxon>
        <taxon>Eutheria</taxon>
        <taxon>Euarchontoglires</taxon>
        <taxon>Primates</taxon>
        <taxon>Haplorrhini</taxon>
        <taxon>Catarrhini</taxon>
        <taxon>Hominidae</taxon>
        <taxon>Homo</taxon>
    </lineage>
</organism>
<keyword id="KW-0002">3D-structure</keyword>
<keyword id="KW-0025">Alternative splicing</keyword>
<keyword id="KW-1003">Cell membrane</keyword>
<keyword id="KW-0968">Cytoplasmic vesicle</keyword>
<keyword id="KW-0256">Endoplasmic reticulum</keyword>
<keyword id="KW-0931">ER-Golgi transport</keyword>
<keyword id="KW-0333">Golgi apparatus</keyword>
<keyword id="KW-0342">GTP-binding</keyword>
<keyword id="KW-0378">Hydrolase</keyword>
<keyword id="KW-0449">Lipoprotein</keyword>
<keyword id="KW-0460">Magnesium</keyword>
<keyword id="KW-0472">Membrane</keyword>
<keyword id="KW-0479">Metal-binding</keyword>
<keyword id="KW-0547">Nucleotide-binding</keyword>
<keyword id="KW-0597">Phosphoprotein</keyword>
<keyword id="KW-0636">Prenylation</keyword>
<keyword id="KW-0653">Protein transport</keyword>
<keyword id="KW-1267">Proteomics identification</keyword>
<keyword id="KW-1185">Reference proteome</keyword>
<keyword id="KW-0813">Transport</keyword>
<accession>Q8WUD1</accession>
<accession>B2RD03</accession>
<accession>D3DS24</accession>
<accession>Q6NZ33</accession>
<sequence>MTYAYLFKYIIIGDTGVGKSCLLLQFTDKRFQPVHDLTIGVEFGARMVNIDGKQIKLQIWDTAGQESFRSITRSYYRGAAGALLVYDITRRETFNHLTSWLEDARQHSSSNMVIMLIGNKSDLESRRDVKREEGEAFAREHGLIFMETSAKTACNVEEAFINTAKEIYRKIQQGLFDVHNEANGIKIGPQQSISTSVGPSASQRNSRDIGSNSGCC</sequence>
<evidence type="ECO:0000250" key="1"/>
<evidence type="ECO:0000250" key="2">
    <source>
        <dbReference type="UniProtKB" id="P59279"/>
    </source>
</evidence>
<evidence type="ECO:0000250" key="3">
    <source>
        <dbReference type="UniProtKB" id="P61106"/>
    </source>
</evidence>
<evidence type="ECO:0000256" key="4">
    <source>
        <dbReference type="SAM" id="MobiDB-lite"/>
    </source>
</evidence>
<evidence type="ECO:0000269" key="5">
    <source>
    </source>
</evidence>
<evidence type="ECO:0000269" key="6">
    <source>
    </source>
</evidence>
<evidence type="ECO:0000269" key="7">
    <source ref="9"/>
</evidence>
<evidence type="ECO:0000303" key="8">
    <source>
    </source>
</evidence>
<evidence type="ECO:0000303" key="9">
    <source>
    </source>
</evidence>
<evidence type="ECO:0000305" key="10"/>
<evidence type="ECO:0000305" key="11">
    <source>
    </source>
</evidence>
<evidence type="ECO:0000312" key="12">
    <source>
        <dbReference type="HGNC" id="HGNC:20246"/>
    </source>
</evidence>
<evidence type="ECO:0007744" key="13">
    <source>
        <dbReference type="PDB" id="2A5J"/>
    </source>
</evidence>
<evidence type="ECO:0007744" key="14">
    <source>
    </source>
</evidence>
<evidence type="ECO:0007829" key="15">
    <source>
        <dbReference type="PDB" id="2A5J"/>
    </source>
</evidence>
<feature type="chain" id="PRO_0000121071" description="Ras-related protein Rab-2B">
    <location>
        <begin position="1"/>
        <end position="216"/>
    </location>
</feature>
<feature type="region of interest" description="Disordered" evidence="4">
    <location>
        <begin position="189"/>
        <end position="216"/>
    </location>
</feature>
<feature type="short sequence motif" description="Switch 1" evidence="3">
    <location>
        <begin position="37"/>
        <end position="42"/>
    </location>
</feature>
<feature type="short sequence motif" description="Switch 2" evidence="3">
    <location>
        <begin position="63"/>
        <end position="72"/>
    </location>
</feature>
<feature type="binding site" evidence="7 13">
    <location>
        <position position="16"/>
    </location>
    <ligand>
        <name>GDP</name>
        <dbReference type="ChEBI" id="CHEBI:58189"/>
    </ligand>
</feature>
<feature type="binding site" evidence="3">
    <location>
        <position position="16"/>
    </location>
    <ligand>
        <name>GTP</name>
        <dbReference type="ChEBI" id="CHEBI:37565"/>
    </ligand>
</feature>
<feature type="binding site" evidence="7 13">
    <location>
        <position position="17"/>
    </location>
    <ligand>
        <name>GDP</name>
        <dbReference type="ChEBI" id="CHEBI:58189"/>
    </ligand>
</feature>
<feature type="binding site" evidence="3">
    <location>
        <position position="17"/>
    </location>
    <ligand>
        <name>GTP</name>
        <dbReference type="ChEBI" id="CHEBI:37565"/>
    </ligand>
</feature>
<feature type="binding site" evidence="7 13">
    <location>
        <position position="18"/>
    </location>
    <ligand>
        <name>GDP</name>
        <dbReference type="ChEBI" id="CHEBI:58189"/>
    </ligand>
</feature>
<feature type="binding site" evidence="3">
    <location>
        <position position="18"/>
    </location>
    <ligand>
        <name>GTP</name>
        <dbReference type="ChEBI" id="CHEBI:37565"/>
    </ligand>
</feature>
<feature type="binding site" evidence="7 13">
    <location>
        <position position="19"/>
    </location>
    <ligand>
        <name>GDP</name>
        <dbReference type="ChEBI" id="CHEBI:58189"/>
    </ligand>
</feature>
<feature type="binding site" evidence="3">
    <location>
        <position position="19"/>
    </location>
    <ligand>
        <name>GTP</name>
        <dbReference type="ChEBI" id="CHEBI:37565"/>
    </ligand>
</feature>
<feature type="binding site" evidence="7 13">
    <location>
        <position position="20"/>
    </location>
    <ligand>
        <name>GDP</name>
        <dbReference type="ChEBI" id="CHEBI:58189"/>
    </ligand>
</feature>
<feature type="binding site" evidence="3">
    <location>
        <position position="20"/>
    </location>
    <ligand>
        <name>GTP</name>
        <dbReference type="ChEBI" id="CHEBI:37565"/>
    </ligand>
</feature>
<feature type="binding site" evidence="7 13">
    <location>
        <position position="20"/>
    </location>
    <ligand>
        <name>Mg(2+)</name>
        <dbReference type="ChEBI" id="CHEBI:18420"/>
    </ligand>
</feature>
<feature type="binding site" evidence="7 13">
    <location>
        <position position="21"/>
    </location>
    <ligand>
        <name>GDP</name>
        <dbReference type="ChEBI" id="CHEBI:58189"/>
    </ligand>
</feature>
<feature type="binding site" evidence="3">
    <location>
        <position position="21"/>
    </location>
    <ligand>
        <name>GTP</name>
        <dbReference type="ChEBI" id="CHEBI:37565"/>
    </ligand>
</feature>
<feature type="binding site" evidence="3">
    <location>
        <position position="38"/>
    </location>
    <ligand>
        <name>GTP</name>
        <dbReference type="ChEBI" id="CHEBI:37565"/>
    </ligand>
</feature>
<feature type="binding site" evidence="3">
    <location>
        <position position="38"/>
    </location>
    <ligand>
        <name>Mg(2+)</name>
        <dbReference type="ChEBI" id="CHEBI:18420"/>
    </ligand>
</feature>
<feature type="binding site" evidence="3">
    <location>
        <position position="61"/>
    </location>
    <ligand>
        <name>Mg(2+)</name>
        <dbReference type="ChEBI" id="CHEBI:18420"/>
    </ligand>
</feature>
<feature type="binding site" evidence="3">
    <location>
        <position position="64"/>
    </location>
    <ligand>
        <name>GTP</name>
        <dbReference type="ChEBI" id="CHEBI:37565"/>
    </ligand>
</feature>
<feature type="binding site" evidence="7 13">
    <location>
        <position position="119"/>
    </location>
    <ligand>
        <name>GDP</name>
        <dbReference type="ChEBI" id="CHEBI:58189"/>
    </ligand>
</feature>
<feature type="binding site" evidence="3">
    <location>
        <position position="119"/>
    </location>
    <ligand>
        <name>GTP</name>
        <dbReference type="ChEBI" id="CHEBI:37565"/>
    </ligand>
</feature>
<feature type="binding site" evidence="3">
    <location>
        <position position="120"/>
    </location>
    <ligand>
        <name>GTP</name>
        <dbReference type="ChEBI" id="CHEBI:37565"/>
    </ligand>
</feature>
<feature type="binding site" evidence="7 13">
    <location>
        <position position="122"/>
    </location>
    <ligand>
        <name>GDP</name>
        <dbReference type="ChEBI" id="CHEBI:58189"/>
    </ligand>
</feature>
<feature type="binding site" evidence="3">
    <location>
        <position position="122"/>
    </location>
    <ligand>
        <name>GTP</name>
        <dbReference type="ChEBI" id="CHEBI:37565"/>
    </ligand>
</feature>
<feature type="binding site" evidence="7 13">
    <location>
        <position position="150"/>
    </location>
    <ligand>
        <name>GDP</name>
        <dbReference type="ChEBI" id="CHEBI:58189"/>
    </ligand>
</feature>
<feature type="binding site" evidence="3">
    <location>
        <position position="150"/>
    </location>
    <ligand>
        <name>GTP</name>
        <dbReference type="ChEBI" id="CHEBI:37565"/>
    </ligand>
</feature>
<feature type="binding site" evidence="7 13">
    <location>
        <position position="151"/>
    </location>
    <ligand>
        <name>GDP</name>
        <dbReference type="ChEBI" id="CHEBI:58189"/>
    </ligand>
</feature>
<feature type="binding site" evidence="3">
    <location>
        <position position="151"/>
    </location>
    <ligand>
        <name>GTP</name>
        <dbReference type="ChEBI" id="CHEBI:37565"/>
    </ligand>
</feature>
<feature type="modified residue" description="Phosphoserine" evidence="14">
    <location>
        <position position="202"/>
    </location>
</feature>
<feature type="lipid moiety-binding region" description="S-geranylgeranyl cysteine" evidence="1">
    <location>
        <position position="215"/>
    </location>
</feature>
<feature type="lipid moiety-binding region" description="S-geranylgeranyl cysteine" evidence="1">
    <location>
        <position position="216"/>
    </location>
</feature>
<feature type="splice variant" id="VSP_055829" description="In isoform 2." evidence="8 9">
    <original>MTYAYLFKYIIIGDTGVGKSCLLLQFTDKRFQPVHDLTIGVEFGARMVNIDGKQIKLQIWDTAGQESFRSITRSYY</original>
    <variation>MENKSNCKSGI</variation>
    <location>
        <begin position="1"/>
        <end position="76"/>
    </location>
</feature>
<feature type="sequence variant" id="VAR_051709" description="In dbSNP:rs17106411.">
    <original>N</original>
    <variation>T</variation>
    <location>
        <position position="212"/>
    </location>
</feature>
<feature type="sequence conflict" description="In Ref. 1; AAN86142." evidence="10" ref="1">
    <original>Y</original>
    <variation>H</variation>
    <location>
        <position position="168"/>
    </location>
</feature>
<feature type="strand" evidence="15">
    <location>
        <begin position="5"/>
        <end position="14"/>
    </location>
</feature>
<feature type="helix" evidence="15">
    <location>
        <begin position="19"/>
        <end position="28"/>
    </location>
</feature>
<feature type="strand" evidence="15">
    <location>
        <begin position="41"/>
        <end position="50"/>
    </location>
</feature>
<feature type="strand" evidence="15">
    <location>
        <begin position="53"/>
        <end position="60"/>
    </location>
</feature>
<feature type="helix" evidence="15">
    <location>
        <begin position="65"/>
        <end position="67"/>
    </location>
</feature>
<feature type="helix" evidence="15">
    <location>
        <begin position="73"/>
        <end position="76"/>
    </location>
</feature>
<feature type="strand" evidence="15">
    <location>
        <begin position="80"/>
        <end position="87"/>
    </location>
</feature>
<feature type="helix" evidence="15">
    <location>
        <begin position="91"/>
        <end position="95"/>
    </location>
</feature>
<feature type="helix" evidence="15">
    <location>
        <begin position="97"/>
        <end position="107"/>
    </location>
</feature>
<feature type="strand" evidence="15">
    <location>
        <begin position="113"/>
        <end position="119"/>
    </location>
</feature>
<feature type="helix" evidence="15">
    <location>
        <begin position="124"/>
        <end position="126"/>
    </location>
</feature>
<feature type="helix" evidence="15">
    <location>
        <begin position="131"/>
        <end position="141"/>
    </location>
</feature>
<feature type="strand" evidence="15">
    <location>
        <begin position="144"/>
        <end position="148"/>
    </location>
</feature>
<feature type="turn" evidence="15">
    <location>
        <begin position="150"/>
        <end position="152"/>
    </location>
</feature>
<feature type="helix" evidence="15">
    <location>
        <begin position="156"/>
        <end position="172"/>
    </location>
</feature>
<proteinExistence type="evidence at protein level"/>
<dbReference type="EC" id="3.6.5.2" evidence="11"/>
<dbReference type="EMBL" id="AF468652">
    <property type="protein sequence ID" value="AAN86142.1"/>
    <property type="molecule type" value="mRNA"/>
</dbReference>
<dbReference type="EMBL" id="AK296057">
    <property type="protein sequence ID" value="BAG58820.1"/>
    <property type="molecule type" value="mRNA"/>
</dbReference>
<dbReference type="EMBL" id="AK315354">
    <property type="protein sequence ID" value="BAG37750.1"/>
    <property type="molecule type" value="mRNA"/>
</dbReference>
<dbReference type="EMBL" id="CH471078">
    <property type="protein sequence ID" value="EAW66382.1"/>
    <property type="molecule type" value="Genomic_DNA"/>
</dbReference>
<dbReference type="EMBL" id="CH471078">
    <property type="protein sequence ID" value="EAW66383.1"/>
    <property type="molecule type" value="Genomic_DNA"/>
</dbReference>
<dbReference type="EMBL" id="BC020839">
    <property type="protein sequence ID" value="AAH20839.1"/>
    <property type="molecule type" value="mRNA"/>
</dbReference>
<dbReference type="EMBL" id="BC066366">
    <property type="protein sequence ID" value="AAH66366.1"/>
    <property type="molecule type" value="mRNA"/>
</dbReference>
<dbReference type="CCDS" id="CCDS9570.1">
    <molecule id="Q8WUD1-1"/>
</dbReference>
<dbReference type="RefSeq" id="NP_001156852.1">
    <property type="nucleotide sequence ID" value="NM_001163380.1"/>
</dbReference>
<dbReference type="RefSeq" id="NP_116235.2">
    <molecule id="Q8WUD1-1"/>
    <property type="nucleotide sequence ID" value="NM_032846.3"/>
</dbReference>
<dbReference type="RefSeq" id="XP_016877200.1">
    <property type="nucleotide sequence ID" value="XM_017021711.1"/>
</dbReference>
<dbReference type="PDB" id="2A5J">
    <property type="method" value="X-ray"/>
    <property type="resolution" value="1.50 A"/>
    <property type="chains" value="A=5-176"/>
</dbReference>
<dbReference type="PDBsum" id="2A5J"/>
<dbReference type="SMR" id="Q8WUD1"/>
<dbReference type="BioGRID" id="124366">
    <property type="interactions" value="79"/>
</dbReference>
<dbReference type="FunCoup" id="Q8WUD1">
    <property type="interactions" value="1665"/>
</dbReference>
<dbReference type="IntAct" id="Q8WUD1">
    <property type="interactions" value="68"/>
</dbReference>
<dbReference type="MINT" id="Q8WUD1"/>
<dbReference type="STRING" id="9606.ENSP00000380869"/>
<dbReference type="GlyGen" id="Q8WUD1">
    <property type="glycosylation" value="2 sites, 1 N-linked glycan (1 site), 1 O-linked glycan (1 site)"/>
</dbReference>
<dbReference type="iPTMnet" id="Q8WUD1"/>
<dbReference type="PhosphoSitePlus" id="Q8WUD1"/>
<dbReference type="SwissPalm" id="Q8WUD1"/>
<dbReference type="BioMuta" id="RAB2B"/>
<dbReference type="DMDM" id="28436385"/>
<dbReference type="jPOST" id="Q8WUD1"/>
<dbReference type="MassIVE" id="Q8WUD1"/>
<dbReference type="PaxDb" id="9606-ENSP00000380869"/>
<dbReference type="PeptideAtlas" id="Q8WUD1"/>
<dbReference type="ProteomicsDB" id="74657">
    <molecule id="Q8WUD1-1"/>
</dbReference>
<dbReference type="Pumba" id="Q8WUD1"/>
<dbReference type="Antibodypedia" id="22150">
    <property type="antibodies" value="209 antibodies from 31 providers"/>
</dbReference>
<dbReference type="DNASU" id="84932"/>
<dbReference type="Ensembl" id="ENST00000397762.6">
    <molecule id="Q8WUD1-1"/>
    <property type="protein sequence ID" value="ENSP00000380869.1"/>
    <property type="gene ID" value="ENSG00000129472.15"/>
</dbReference>
<dbReference type="GeneID" id="84932"/>
<dbReference type="KEGG" id="hsa:84932"/>
<dbReference type="MANE-Select" id="ENST00000397762.6">
    <property type="protein sequence ID" value="ENSP00000380869.1"/>
    <property type="RefSeq nucleotide sequence ID" value="NM_032846.4"/>
    <property type="RefSeq protein sequence ID" value="NP_116235.2"/>
</dbReference>
<dbReference type="UCSC" id="uc010tlt.2">
    <molecule id="Q8WUD1-1"/>
    <property type="organism name" value="human"/>
</dbReference>
<dbReference type="AGR" id="HGNC:20246"/>
<dbReference type="CTD" id="84932"/>
<dbReference type="DisGeNET" id="84932"/>
<dbReference type="GeneCards" id="RAB2B"/>
<dbReference type="HGNC" id="HGNC:20246">
    <property type="gene designation" value="RAB2B"/>
</dbReference>
<dbReference type="HPA" id="ENSG00000129472">
    <property type="expression patterns" value="Low tissue specificity"/>
</dbReference>
<dbReference type="MIM" id="607466">
    <property type="type" value="gene"/>
</dbReference>
<dbReference type="neXtProt" id="NX_Q8WUD1"/>
<dbReference type="OpenTargets" id="ENSG00000129472"/>
<dbReference type="PharmGKB" id="PA134865942"/>
<dbReference type="VEuPathDB" id="HostDB:ENSG00000129472"/>
<dbReference type="eggNOG" id="KOG0098">
    <property type="taxonomic scope" value="Eukaryota"/>
</dbReference>
<dbReference type="GeneTree" id="ENSGT00940000153886"/>
<dbReference type="InParanoid" id="Q8WUD1"/>
<dbReference type="OMA" id="FNHLTCW"/>
<dbReference type="OrthoDB" id="9989112at2759"/>
<dbReference type="PAN-GO" id="Q8WUD1">
    <property type="GO annotations" value="6 GO annotations based on evolutionary models"/>
</dbReference>
<dbReference type="PhylomeDB" id="Q8WUD1"/>
<dbReference type="TreeFam" id="TF300032"/>
<dbReference type="BRENDA" id="3.6.5.2">
    <property type="organism ID" value="2681"/>
</dbReference>
<dbReference type="PathwayCommons" id="Q8WUD1"/>
<dbReference type="Reactome" id="R-HSA-8873719">
    <property type="pathway name" value="RAB geranylgeranylation"/>
</dbReference>
<dbReference type="SignaLink" id="Q8WUD1"/>
<dbReference type="BioGRID-ORCS" id="84932">
    <property type="hits" value="16 hits in 1156 CRISPR screens"/>
</dbReference>
<dbReference type="CD-CODE" id="91857CE7">
    <property type="entry name" value="Nucleolus"/>
</dbReference>
<dbReference type="ChiTaRS" id="RAB2B">
    <property type="organism name" value="human"/>
</dbReference>
<dbReference type="EvolutionaryTrace" id="Q8WUD1"/>
<dbReference type="GenomeRNAi" id="84932"/>
<dbReference type="Pharos" id="Q8WUD1">
    <property type="development level" value="Tbio"/>
</dbReference>
<dbReference type="PRO" id="PR:Q8WUD1"/>
<dbReference type="Proteomes" id="UP000005640">
    <property type="component" value="Chromosome 14"/>
</dbReference>
<dbReference type="RNAct" id="Q8WUD1">
    <property type="molecule type" value="protein"/>
</dbReference>
<dbReference type="Bgee" id="ENSG00000129472">
    <property type="expression patterns" value="Expressed in pancreatic ductal cell and 186 other cell types or tissues"/>
</dbReference>
<dbReference type="ExpressionAtlas" id="Q8WUD1">
    <property type="expression patterns" value="baseline and differential"/>
</dbReference>
<dbReference type="GO" id="GO:0001669">
    <property type="term" value="C:acrosomal vesicle"/>
    <property type="evidence" value="ECO:0000250"/>
    <property type="project" value="UniProtKB"/>
</dbReference>
<dbReference type="GO" id="GO:0000421">
    <property type="term" value="C:autophagosome membrane"/>
    <property type="evidence" value="ECO:0007669"/>
    <property type="project" value="UniProtKB-SubCell"/>
</dbReference>
<dbReference type="GO" id="GO:0005789">
    <property type="term" value="C:endoplasmic reticulum membrane"/>
    <property type="evidence" value="ECO:0007669"/>
    <property type="project" value="UniProtKB-SubCell"/>
</dbReference>
<dbReference type="GO" id="GO:0070062">
    <property type="term" value="C:extracellular exosome"/>
    <property type="evidence" value="ECO:0007005"/>
    <property type="project" value="UniProtKB"/>
</dbReference>
<dbReference type="GO" id="GO:0005794">
    <property type="term" value="C:Golgi apparatus"/>
    <property type="evidence" value="ECO:0000314"/>
    <property type="project" value="UniProtKB"/>
</dbReference>
<dbReference type="GO" id="GO:0000139">
    <property type="term" value="C:Golgi membrane"/>
    <property type="evidence" value="ECO:0000318"/>
    <property type="project" value="GO_Central"/>
</dbReference>
<dbReference type="GO" id="GO:0005886">
    <property type="term" value="C:plasma membrane"/>
    <property type="evidence" value="ECO:0007669"/>
    <property type="project" value="UniProtKB-SubCell"/>
</dbReference>
<dbReference type="GO" id="GO:0005525">
    <property type="term" value="F:GTP binding"/>
    <property type="evidence" value="ECO:0000318"/>
    <property type="project" value="GO_Central"/>
</dbReference>
<dbReference type="GO" id="GO:0003924">
    <property type="term" value="F:GTPase activity"/>
    <property type="evidence" value="ECO:0000318"/>
    <property type="project" value="GO_Central"/>
</dbReference>
<dbReference type="GO" id="GO:0051607">
    <property type="term" value="P:defense response to virus"/>
    <property type="evidence" value="ECO:0000250"/>
    <property type="project" value="UniProtKB"/>
</dbReference>
<dbReference type="GO" id="GO:0007030">
    <property type="term" value="P:Golgi organization"/>
    <property type="evidence" value="ECO:0000314"/>
    <property type="project" value="UniProtKB"/>
</dbReference>
<dbReference type="GO" id="GO:0045087">
    <property type="term" value="P:innate immune response"/>
    <property type="evidence" value="ECO:0000250"/>
    <property type="project" value="UniProtKB"/>
</dbReference>
<dbReference type="GO" id="GO:0016236">
    <property type="term" value="P:macroautophagy"/>
    <property type="evidence" value="ECO:0007669"/>
    <property type="project" value="Ensembl"/>
</dbReference>
<dbReference type="GO" id="GO:0045921">
    <property type="term" value="P:positive regulation of exocytosis"/>
    <property type="evidence" value="ECO:0000315"/>
    <property type="project" value="UniProtKB"/>
</dbReference>
<dbReference type="GO" id="GO:0032481">
    <property type="term" value="P:positive regulation of type I interferon production"/>
    <property type="evidence" value="ECO:0000250"/>
    <property type="project" value="UniProtKB"/>
</dbReference>
<dbReference type="GO" id="GO:0015031">
    <property type="term" value="P:protein transport"/>
    <property type="evidence" value="ECO:0007669"/>
    <property type="project" value="UniProtKB-KW"/>
</dbReference>
<dbReference type="GO" id="GO:0016192">
    <property type="term" value="P:vesicle-mediated transport"/>
    <property type="evidence" value="ECO:0000318"/>
    <property type="project" value="GO_Central"/>
</dbReference>
<dbReference type="CDD" id="cd01866">
    <property type="entry name" value="Rab2"/>
    <property type="match status" value="1"/>
</dbReference>
<dbReference type="FunFam" id="3.40.50.300:FF:000275">
    <property type="entry name" value="Putative ras-related protein Rab-2A"/>
    <property type="match status" value="1"/>
</dbReference>
<dbReference type="Gene3D" id="3.40.50.300">
    <property type="entry name" value="P-loop containing nucleotide triphosphate hydrolases"/>
    <property type="match status" value="1"/>
</dbReference>
<dbReference type="InterPro" id="IPR027417">
    <property type="entry name" value="P-loop_NTPase"/>
</dbReference>
<dbReference type="InterPro" id="IPR050209">
    <property type="entry name" value="Rab_GTPases_membrane_traffic"/>
</dbReference>
<dbReference type="InterPro" id="IPR005225">
    <property type="entry name" value="Small_GTP-bd"/>
</dbReference>
<dbReference type="InterPro" id="IPR001806">
    <property type="entry name" value="Small_GTPase"/>
</dbReference>
<dbReference type="NCBIfam" id="TIGR00231">
    <property type="entry name" value="small_GTP"/>
    <property type="match status" value="1"/>
</dbReference>
<dbReference type="PANTHER" id="PTHR47979">
    <property type="entry name" value="DRAB11-RELATED"/>
    <property type="match status" value="1"/>
</dbReference>
<dbReference type="Pfam" id="PF00071">
    <property type="entry name" value="Ras"/>
    <property type="match status" value="1"/>
</dbReference>
<dbReference type="PRINTS" id="PR00449">
    <property type="entry name" value="RASTRNSFRMNG"/>
</dbReference>
<dbReference type="SMART" id="SM00175">
    <property type="entry name" value="RAB"/>
    <property type="match status" value="1"/>
</dbReference>
<dbReference type="SMART" id="SM00176">
    <property type="entry name" value="RAN"/>
    <property type="match status" value="1"/>
</dbReference>
<dbReference type="SMART" id="SM00173">
    <property type="entry name" value="RAS"/>
    <property type="match status" value="1"/>
</dbReference>
<dbReference type="SMART" id="SM00174">
    <property type="entry name" value="RHO"/>
    <property type="match status" value="1"/>
</dbReference>
<dbReference type="SUPFAM" id="SSF52540">
    <property type="entry name" value="P-loop containing nucleoside triphosphate hydrolases"/>
    <property type="match status" value="1"/>
</dbReference>
<dbReference type="PROSITE" id="PS51419">
    <property type="entry name" value="RAB"/>
    <property type="match status" value="1"/>
</dbReference>
<gene>
    <name evidence="12" type="primary">RAB2B</name>
</gene>